<name>PFF1_PICST</name>
<gene>
    <name type="ORF">PICST_46351</name>
</gene>
<reference key="1">
    <citation type="journal article" date="2007" name="Nat. Biotechnol.">
        <title>Genome sequence of the lignocellulose-bioconverting and xylose-fermenting yeast Pichia stipitis.</title>
        <authorList>
            <person name="Jeffries T.W."/>
            <person name="Grigoriev I.V."/>
            <person name="Grimwood J."/>
            <person name="Laplaza J.M."/>
            <person name="Aerts A."/>
            <person name="Salamov A."/>
            <person name="Schmutz J."/>
            <person name="Lindquist E."/>
            <person name="Dehal P."/>
            <person name="Shapiro H."/>
            <person name="Jin Y.-S."/>
            <person name="Passoth V."/>
            <person name="Richardson P.M."/>
        </authorList>
    </citation>
    <scope>NUCLEOTIDE SEQUENCE [LARGE SCALE GENOMIC DNA]</scope>
    <source>
        <strain>ATCC 58785 / CBS 6054 / NBRC 10063 / NRRL Y-11545</strain>
    </source>
</reference>
<feature type="chain" id="PRO_0000411736" description="Vacuolar membrane protease">
    <location>
        <begin position="1" status="less than"/>
        <end position="937"/>
    </location>
</feature>
<feature type="topological domain" description="Cytoplasmic" evidence="1">
    <location>
        <begin position="1"/>
        <end position="16"/>
    </location>
</feature>
<feature type="transmembrane region" description="Helical; Name=1" evidence="3">
    <location>
        <begin position="17"/>
        <end position="37"/>
    </location>
</feature>
<feature type="topological domain" description="Vacuolar" evidence="1">
    <location>
        <begin position="38"/>
        <end position="373"/>
    </location>
</feature>
<feature type="transmembrane region" description="Helical; Name=2" evidence="3">
    <location>
        <begin position="374"/>
        <end position="394"/>
    </location>
</feature>
<feature type="topological domain" description="Cytoplasmic" evidence="1">
    <location>
        <begin position="395"/>
        <end position="407"/>
    </location>
</feature>
<feature type="transmembrane region" description="Helical; Name=3" evidence="3">
    <location>
        <begin position="408"/>
        <end position="428"/>
    </location>
</feature>
<feature type="topological domain" description="Vacuolar" evidence="1">
    <location>
        <begin position="429"/>
        <end position="437"/>
    </location>
</feature>
<feature type="transmembrane region" description="Helical; Name=4" evidence="3">
    <location>
        <begin position="438"/>
        <end position="458"/>
    </location>
</feature>
<feature type="topological domain" description="Cytoplasmic" evidence="1">
    <location>
        <begin position="459"/>
        <end position="475"/>
    </location>
</feature>
<feature type="transmembrane region" description="Helical; Name=5" evidence="3">
    <location>
        <begin position="476"/>
        <end position="496"/>
    </location>
</feature>
<feature type="topological domain" description="Vacuolar" evidence="1">
    <location>
        <begin position="497"/>
        <end position="510"/>
    </location>
</feature>
<feature type="transmembrane region" description="Helical; Name=6" evidence="3">
    <location>
        <begin position="511"/>
        <end position="531"/>
    </location>
</feature>
<feature type="topological domain" description="Cytoplasmic" evidence="1">
    <location>
        <begin position="532"/>
        <end position="580"/>
    </location>
</feature>
<feature type="transmembrane region" description="Helical; Name=7" evidence="3">
    <location>
        <begin position="581"/>
        <end position="601"/>
    </location>
</feature>
<feature type="topological domain" description="Vacuolar" evidence="1">
    <location>
        <begin position="602"/>
        <end position="618"/>
    </location>
</feature>
<feature type="transmembrane region" description="Helical; Name=8" evidence="3">
    <location>
        <begin position="619"/>
        <end position="639"/>
    </location>
</feature>
<feature type="topological domain" description="Cytoplasmic" evidence="1">
    <location>
        <begin position="640"/>
        <end position="643"/>
    </location>
</feature>
<feature type="transmembrane region" description="Helical; Name=9" evidence="3">
    <location>
        <begin position="644"/>
        <end position="664"/>
    </location>
</feature>
<feature type="topological domain" description="Vacuolar" evidence="1">
    <location>
        <begin position="665"/>
        <end position="937"/>
    </location>
</feature>
<feature type="active site" description="Proton acceptor" evidence="2">
    <location>
        <position position="201"/>
    </location>
</feature>
<feature type="binding site" evidence="2">
    <location>
        <position position="154"/>
    </location>
    <ligand>
        <name>Zn(2+)</name>
        <dbReference type="ChEBI" id="CHEBI:29105"/>
        <label>1</label>
        <note>catalytic</note>
    </ligand>
</feature>
<feature type="binding site" evidence="2">
    <location>
        <position position="166"/>
    </location>
    <ligand>
        <name>Zn(2+)</name>
        <dbReference type="ChEBI" id="CHEBI:29105"/>
        <label>1</label>
        <note>catalytic</note>
    </ligand>
</feature>
<feature type="binding site" evidence="2">
    <location>
        <position position="166"/>
    </location>
    <ligand>
        <name>Zn(2+)</name>
        <dbReference type="ChEBI" id="CHEBI:29105"/>
        <label>2</label>
        <note>catalytic</note>
    </ligand>
</feature>
<feature type="binding site" evidence="2">
    <location>
        <position position="202"/>
    </location>
    <ligand>
        <name>Zn(2+)</name>
        <dbReference type="ChEBI" id="CHEBI:29105"/>
        <label>2</label>
        <note>catalytic</note>
    </ligand>
</feature>
<feature type="binding site" evidence="2">
    <location>
        <position position="227"/>
    </location>
    <ligand>
        <name>Zn(2+)</name>
        <dbReference type="ChEBI" id="CHEBI:29105"/>
        <label>1</label>
        <note>catalytic</note>
    </ligand>
</feature>
<feature type="binding site" evidence="2">
    <location>
        <position position="300"/>
    </location>
    <ligand>
        <name>Zn(2+)</name>
        <dbReference type="ChEBI" id="CHEBI:29105"/>
        <label>2</label>
        <note>catalytic</note>
    </ligand>
</feature>
<feature type="site" description="Transition state stabilizer" evidence="2">
    <location>
        <position position="299"/>
    </location>
</feature>
<feature type="glycosylation site" description="N-linked (GlcNAc...) asparagine" evidence="4">
    <location>
        <position position="106"/>
    </location>
</feature>
<feature type="glycosylation site" description="N-linked (GlcNAc...) asparagine" evidence="4">
    <location>
        <position position="140"/>
    </location>
</feature>
<feature type="glycosylation site" description="N-linked (GlcNAc...) asparagine" evidence="4">
    <location>
        <position position="606"/>
    </location>
</feature>
<feature type="glycosylation site" description="N-linked (GlcNAc...) asparagine" evidence="4">
    <location>
        <position position="758"/>
    </location>
</feature>
<feature type="glycosylation site" description="N-linked (GlcNAc...) asparagine" evidence="4">
    <location>
        <position position="870"/>
    </location>
</feature>
<feature type="glycosylation site" description="N-linked (GlcNAc...) asparagine" evidence="4">
    <location>
        <position position="887"/>
    </location>
</feature>
<feature type="non-terminal residue">
    <location>
        <position position="1"/>
    </location>
</feature>
<evidence type="ECO:0000250" key="1">
    <source>
        <dbReference type="UniProtKB" id="P38244"/>
    </source>
</evidence>
<evidence type="ECO:0000250" key="2">
    <source>
        <dbReference type="UniProtKB" id="P80561"/>
    </source>
</evidence>
<evidence type="ECO:0000255" key="3"/>
<evidence type="ECO:0000255" key="4">
    <source>
        <dbReference type="PROSITE-ProRule" id="PRU00498"/>
    </source>
</evidence>
<evidence type="ECO:0000305" key="5"/>
<organism>
    <name type="scientific">Scheffersomyces stipitis (strain ATCC 58785 / CBS 6054 / NBRC 10063 / NRRL Y-11545)</name>
    <name type="common">Yeast</name>
    <name type="synonym">Pichia stipitis</name>
    <dbReference type="NCBI Taxonomy" id="322104"/>
    <lineage>
        <taxon>Eukaryota</taxon>
        <taxon>Fungi</taxon>
        <taxon>Dikarya</taxon>
        <taxon>Ascomycota</taxon>
        <taxon>Saccharomycotina</taxon>
        <taxon>Pichiomycetes</taxon>
        <taxon>Debaryomycetaceae</taxon>
        <taxon>Scheffersomyces</taxon>
    </lineage>
</organism>
<proteinExistence type="inferred from homology"/>
<sequence length="937" mass="104591">PNGFVKFIRSIFGYRKTSLTLFVILTYVAVLLLAYLDHSLYYSVDLPTSHKEQELLHQAWVDLQHIAKYEHAYGSSGNDYVHDYLESRIVSAVAHKSYVEYDNDLNYTNNIMFGSRSELSGNSFNSVSYYESNNLVVRINGTDETLPALLLSAHFDSVPSSFGVTDDGMGIASLLGVLYYYTGKSTARPRRTIVLNFNNDEEFGLYGATSFLSHPWATGVHYFLNLEGTGAGGKAILFRGTDYGITKYFKGVRYPYGTSIFQQGFNNHLIHSETDYKIYKEKGGLRGLDVAFYKPRDLYHTAGDNIKNIDIKSLWHMLSNALDFTAIVTKGKIDLDADSLDSESSKSNTDTAVYTSFLNFFFAFPTSQVVVASILLLVLIPGISIPFLIIIFGYKKNWELSFVNVTKFPISLAISAALLNLFTNGFIVPFNQFLPNSSPFALVAILFATFLLLNYLILNGINLIFVSYKIVNHDEKLISIIETSFLYWVVLIYSTAKLANNVIGDDHSGEFPIIFLCALQAVASIFGLIGWSFKPVPKEHYVVVPQEEAEPLLGSSDNFNYGSPDVEDDRLVSDGSYDWSIQFLTIVPISTYLIYNSGFLVVDGINKSIQESLISQNLIYKLLQTFAISLSIPLLPFIFKVNRLFVLALFLISTIGVLFVATADSFNVANPLKLRFIQYIDLDKSAQDSFVSVIGREASPLQFVLSDIPSVKDSKGAVACVPTRDGLQDCSYKSSLDPKLVPGAKSFDDYLKVDILKNSSSNVDYPFGLLTGEIRIRVPKNRECVLDFKPSESTKIVSPFKDSPVKTVIVYKGKKSATTKEVEAESIPEGFSKDKDGNYVYKDLVGIDQLQLNKLDWDKSYHVGFQWVPNFSDVDINMKKSATNKLNVSVKCFWAELGKGEESTIPAYEELLHYSPNYVSWANSAKGLVSVSKTVEL</sequence>
<protein>
    <recommendedName>
        <fullName evidence="1">Vacuolar membrane protease</fullName>
        <ecNumber evidence="5">3.4.-.-</ecNumber>
    </recommendedName>
    <alternativeName>
        <fullName evidence="1">FXNA-related family protease 1</fullName>
    </alternativeName>
</protein>
<keyword id="KW-0325">Glycoprotein</keyword>
<keyword id="KW-0378">Hydrolase</keyword>
<keyword id="KW-0472">Membrane</keyword>
<keyword id="KW-0479">Metal-binding</keyword>
<keyword id="KW-0482">Metalloprotease</keyword>
<keyword id="KW-0645">Protease</keyword>
<keyword id="KW-1185">Reference proteome</keyword>
<keyword id="KW-0812">Transmembrane</keyword>
<keyword id="KW-1133">Transmembrane helix</keyword>
<keyword id="KW-0926">Vacuole</keyword>
<keyword id="KW-0862">Zinc</keyword>
<comment type="function">
    <text evidence="1">May be involved in vacuolar sorting and osmoregulation.</text>
</comment>
<comment type="cofactor">
    <cofactor evidence="2">
        <name>Zn(2+)</name>
        <dbReference type="ChEBI" id="CHEBI:29105"/>
    </cofactor>
    <text evidence="2">Binds 2 Zn(2+) ions per subunit.</text>
</comment>
<comment type="subcellular location">
    <subcellularLocation>
        <location evidence="1">Vacuole membrane</location>
        <topology evidence="3">Multi-pass membrane protein</topology>
    </subcellularLocation>
</comment>
<comment type="similarity">
    <text evidence="5">Belongs to the peptidase M28 family.</text>
</comment>
<dbReference type="EC" id="3.4.-.-" evidence="5"/>
<dbReference type="EMBL" id="CP000499">
    <property type="protein sequence ID" value="ABN67242.2"/>
    <property type="molecule type" value="Genomic_DNA"/>
</dbReference>
<dbReference type="RefSeq" id="XP_001385271.2">
    <property type="nucleotide sequence ID" value="XM_001385234.1"/>
</dbReference>
<dbReference type="SMR" id="A3LW86"/>
<dbReference type="FunCoup" id="A3LW86">
    <property type="interactions" value="18"/>
</dbReference>
<dbReference type="STRING" id="322104.A3LW86"/>
<dbReference type="GeneID" id="4839595"/>
<dbReference type="KEGG" id="pic:PICST_46351"/>
<dbReference type="eggNOG" id="KOG2194">
    <property type="taxonomic scope" value="Eukaryota"/>
</dbReference>
<dbReference type="HOGENOM" id="CLU_006412_1_0_1"/>
<dbReference type="InParanoid" id="A3LW86"/>
<dbReference type="OMA" id="TPWPVTI"/>
<dbReference type="OrthoDB" id="76293at2759"/>
<dbReference type="Proteomes" id="UP000002258">
    <property type="component" value="Chromosome 5"/>
</dbReference>
<dbReference type="GO" id="GO:0005774">
    <property type="term" value="C:vacuolar membrane"/>
    <property type="evidence" value="ECO:0007669"/>
    <property type="project" value="UniProtKB-SubCell"/>
</dbReference>
<dbReference type="GO" id="GO:0046872">
    <property type="term" value="F:metal ion binding"/>
    <property type="evidence" value="ECO:0007669"/>
    <property type="project" value="UniProtKB-KW"/>
</dbReference>
<dbReference type="GO" id="GO:0008235">
    <property type="term" value="F:metalloexopeptidase activity"/>
    <property type="evidence" value="ECO:0007669"/>
    <property type="project" value="InterPro"/>
</dbReference>
<dbReference type="GO" id="GO:0006508">
    <property type="term" value="P:proteolysis"/>
    <property type="evidence" value="ECO:0007669"/>
    <property type="project" value="UniProtKB-KW"/>
</dbReference>
<dbReference type="CDD" id="cd03875">
    <property type="entry name" value="M28_Fxna_like"/>
    <property type="match status" value="1"/>
</dbReference>
<dbReference type="Gene3D" id="3.40.630.10">
    <property type="entry name" value="Zn peptidases"/>
    <property type="match status" value="1"/>
</dbReference>
<dbReference type="InterPro" id="IPR048024">
    <property type="entry name" value="Fxna-like_M28_dom"/>
</dbReference>
<dbReference type="InterPro" id="IPR045175">
    <property type="entry name" value="M28_fam"/>
</dbReference>
<dbReference type="InterPro" id="IPR007484">
    <property type="entry name" value="Peptidase_M28"/>
</dbReference>
<dbReference type="InterPro" id="IPR053975">
    <property type="entry name" value="PFF1_C"/>
</dbReference>
<dbReference type="InterPro" id="IPR053976">
    <property type="entry name" value="PFF1_TM"/>
</dbReference>
<dbReference type="PANTHER" id="PTHR12147">
    <property type="entry name" value="METALLOPEPTIDASE M28 FAMILY MEMBER"/>
    <property type="match status" value="1"/>
</dbReference>
<dbReference type="PANTHER" id="PTHR12147:SF58">
    <property type="entry name" value="VACUOLAR MEMBRANE PROTEASE"/>
    <property type="match status" value="1"/>
</dbReference>
<dbReference type="Pfam" id="PF04389">
    <property type="entry name" value="Peptidase_M28"/>
    <property type="match status" value="1"/>
</dbReference>
<dbReference type="Pfam" id="PF22250">
    <property type="entry name" value="PFF1_C"/>
    <property type="match status" value="1"/>
</dbReference>
<dbReference type="Pfam" id="PF22251">
    <property type="entry name" value="PFF1_TM"/>
    <property type="match status" value="2"/>
</dbReference>
<dbReference type="SUPFAM" id="SSF53187">
    <property type="entry name" value="Zn-dependent exopeptidases"/>
    <property type="match status" value="1"/>
</dbReference>
<accession>A3LW86</accession>